<dbReference type="EC" id="6.1.1.5" evidence="1"/>
<dbReference type="EMBL" id="CP001197">
    <property type="protein sequence ID" value="ACL07223.1"/>
    <property type="molecule type" value="Genomic_DNA"/>
</dbReference>
<dbReference type="SMR" id="B8DPD6"/>
<dbReference type="STRING" id="883.DvMF_0266"/>
<dbReference type="KEGG" id="dvm:DvMF_0266"/>
<dbReference type="eggNOG" id="COG0060">
    <property type="taxonomic scope" value="Bacteria"/>
</dbReference>
<dbReference type="HOGENOM" id="CLU_001493_7_0_7"/>
<dbReference type="OrthoDB" id="9810365at2"/>
<dbReference type="GO" id="GO:0005829">
    <property type="term" value="C:cytosol"/>
    <property type="evidence" value="ECO:0007669"/>
    <property type="project" value="TreeGrafter"/>
</dbReference>
<dbReference type="GO" id="GO:0002161">
    <property type="term" value="F:aminoacyl-tRNA deacylase activity"/>
    <property type="evidence" value="ECO:0007669"/>
    <property type="project" value="InterPro"/>
</dbReference>
<dbReference type="GO" id="GO:0005524">
    <property type="term" value="F:ATP binding"/>
    <property type="evidence" value="ECO:0007669"/>
    <property type="project" value="UniProtKB-UniRule"/>
</dbReference>
<dbReference type="GO" id="GO:0004822">
    <property type="term" value="F:isoleucine-tRNA ligase activity"/>
    <property type="evidence" value="ECO:0007669"/>
    <property type="project" value="UniProtKB-UniRule"/>
</dbReference>
<dbReference type="GO" id="GO:0000049">
    <property type="term" value="F:tRNA binding"/>
    <property type="evidence" value="ECO:0007669"/>
    <property type="project" value="InterPro"/>
</dbReference>
<dbReference type="GO" id="GO:0008270">
    <property type="term" value="F:zinc ion binding"/>
    <property type="evidence" value="ECO:0007669"/>
    <property type="project" value="UniProtKB-UniRule"/>
</dbReference>
<dbReference type="GO" id="GO:0006428">
    <property type="term" value="P:isoleucyl-tRNA aminoacylation"/>
    <property type="evidence" value="ECO:0007669"/>
    <property type="project" value="UniProtKB-UniRule"/>
</dbReference>
<dbReference type="CDD" id="cd07960">
    <property type="entry name" value="Anticodon_Ia_Ile_BEm"/>
    <property type="match status" value="1"/>
</dbReference>
<dbReference type="CDD" id="cd00818">
    <property type="entry name" value="IleRS_core"/>
    <property type="match status" value="1"/>
</dbReference>
<dbReference type="FunFam" id="1.10.730.20:FF:000001">
    <property type="entry name" value="Isoleucine--tRNA ligase"/>
    <property type="match status" value="1"/>
</dbReference>
<dbReference type="FunFam" id="3.40.50.620:FF:000042">
    <property type="entry name" value="Isoleucine--tRNA ligase"/>
    <property type="match status" value="1"/>
</dbReference>
<dbReference type="Gene3D" id="1.10.730.20">
    <property type="match status" value="1"/>
</dbReference>
<dbReference type="Gene3D" id="3.40.50.620">
    <property type="entry name" value="HUPs"/>
    <property type="match status" value="2"/>
</dbReference>
<dbReference type="Gene3D" id="1.10.10.830">
    <property type="entry name" value="Ile-tRNA synthetase CP2 domain-like"/>
    <property type="match status" value="1"/>
</dbReference>
<dbReference type="Gene3D" id="3.90.740.10">
    <property type="entry name" value="Valyl/Leucyl/Isoleucyl-tRNA synthetase, editing domain"/>
    <property type="match status" value="1"/>
</dbReference>
<dbReference type="HAMAP" id="MF_02002">
    <property type="entry name" value="Ile_tRNA_synth_type1"/>
    <property type="match status" value="1"/>
</dbReference>
<dbReference type="InterPro" id="IPR001412">
    <property type="entry name" value="aa-tRNA-synth_I_CS"/>
</dbReference>
<dbReference type="InterPro" id="IPR002300">
    <property type="entry name" value="aa-tRNA-synth_Ia"/>
</dbReference>
<dbReference type="InterPro" id="IPR033708">
    <property type="entry name" value="Anticodon_Ile_BEm"/>
</dbReference>
<dbReference type="InterPro" id="IPR002301">
    <property type="entry name" value="Ile-tRNA-ligase"/>
</dbReference>
<dbReference type="InterPro" id="IPR023585">
    <property type="entry name" value="Ile-tRNA-ligase_type1"/>
</dbReference>
<dbReference type="InterPro" id="IPR050081">
    <property type="entry name" value="Ile-tRNA_ligase"/>
</dbReference>
<dbReference type="InterPro" id="IPR013155">
    <property type="entry name" value="M/V/L/I-tRNA-synth_anticd-bd"/>
</dbReference>
<dbReference type="InterPro" id="IPR014729">
    <property type="entry name" value="Rossmann-like_a/b/a_fold"/>
</dbReference>
<dbReference type="InterPro" id="IPR009080">
    <property type="entry name" value="tRNAsynth_Ia_anticodon-bd"/>
</dbReference>
<dbReference type="InterPro" id="IPR009008">
    <property type="entry name" value="Val/Leu/Ile-tRNA-synth_edit"/>
</dbReference>
<dbReference type="NCBIfam" id="TIGR00392">
    <property type="entry name" value="ileS"/>
    <property type="match status" value="1"/>
</dbReference>
<dbReference type="PANTHER" id="PTHR42765:SF1">
    <property type="entry name" value="ISOLEUCINE--TRNA LIGASE, MITOCHONDRIAL"/>
    <property type="match status" value="1"/>
</dbReference>
<dbReference type="PANTHER" id="PTHR42765">
    <property type="entry name" value="SOLEUCYL-TRNA SYNTHETASE"/>
    <property type="match status" value="1"/>
</dbReference>
<dbReference type="Pfam" id="PF08264">
    <property type="entry name" value="Anticodon_1"/>
    <property type="match status" value="1"/>
</dbReference>
<dbReference type="Pfam" id="PF00133">
    <property type="entry name" value="tRNA-synt_1"/>
    <property type="match status" value="1"/>
</dbReference>
<dbReference type="PRINTS" id="PR00984">
    <property type="entry name" value="TRNASYNTHILE"/>
</dbReference>
<dbReference type="SUPFAM" id="SSF47323">
    <property type="entry name" value="Anticodon-binding domain of a subclass of class I aminoacyl-tRNA synthetases"/>
    <property type="match status" value="1"/>
</dbReference>
<dbReference type="SUPFAM" id="SSF52374">
    <property type="entry name" value="Nucleotidylyl transferase"/>
    <property type="match status" value="1"/>
</dbReference>
<dbReference type="SUPFAM" id="SSF50677">
    <property type="entry name" value="ValRS/IleRS/LeuRS editing domain"/>
    <property type="match status" value="1"/>
</dbReference>
<dbReference type="PROSITE" id="PS00178">
    <property type="entry name" value="AA_TRNA_LIGASE_I"/>
    <property type="match status" value="1"/>
</dbReference>
<protein>
    <recommendedName>
        <fullName evidence="1">Isoleucine--tRNA ligase</fullName>
        <ecNumber evidence="1">6.1.1.5</ecNumber>
    </recommendedName>
    <alternativeName>
        <fullName evidence="1">Isoleucyl-tRNA synthetase</fullName>
        <shortName evidence="1">IleRS</shortName>
    </alternativeName>
</protein>
<gene>
    <name evidence="1" type="primary">ileS</name>
    <name type="ordered locus">DvMF_0266</name>
</gene>
<keyword id="KW-0030">Aminoacyl-tRNA synthetase</keyword>
<keyword id="KW-0067">ATP-binding</keyword>
<keyword id="KW-0963">Cytoplasm</keyword>
<keyword id="KW-0436">Ligase</keyword>
<keyword id="KW-0479">Metal-binding</keyword>
<keyword id="KW-0547">Nucleotide-binding</keyword>
<keyword id="KW-0648">Protein biosynthesis</keyword>
<keyword id="KW-0862">Zinc</keyword>
<feature type="chain" id="PRO_1000189152" description="Isoleucine--tRNA ligase">
    <location>
        <begin position="1"/>
        <end position="938"/>
    </location>
</feature>
<feature type="short sequence motif" description="'HIGH' region">
    <location>
        <begin position="58"/>
        <end position="68"/>
    </location>
</feature>
<feature type="short sequence motif" description="'KMSKS' region">
    <location>
        <begin position="606"/>
        <end position="610"/>
    </location>
</feature>
<feature type="binding site" evidence="1">
    <location>
        <position position="565"/>
    </location>
    <ligand>
        <name>L-isoleucyl-5'-AMP</name>
        <dbReference type="ChEBI" id="CHEBI:178002"/>
    </ligand>
</feature>
<feature type="binding site" evidence="1">
    <location>
        <position position="609"/>
    </location>
    <ligand>
        <name>ATP</name>
        <dbReference type="ChEBI" id="CHEBI:30616"/>
    </ligand>
</feature>
<feature type="binding site" evidence="1">
    <location>
        <position position="905"/>
    </location>
    <ligand>
        <name>Zn(2+)</name>
        <dbReference type="ChEBI" id="CHEBI:29105"/>
    </ligand>
</feature>
<feature type="binding site" evidence="1">
    <location>
        <position position="908"/>
    </location>
    <ligand>
        <name>Zn(2+)</name>
        <dbReference type="ChEBI" id="CHEBI:29105"/>
    </ligand>
</feature>
<feature type="binding site" evidence="1">
    <location>
        <position position="925"/>
    </location>
    <ligand>
        <name>Zn(2+)</name>
        <dbReference type="ChEBI" id="CHEBI:29105"/>
    </ligand>
</feature>
<feature type="binding site" evidence="1">
    <location>
        <position position="928"/>
    </location>
    <ligand>
        <name>Zn(2+)</name>
        <dbReference type="ChEBI" id="CHEBI:29105"/>
    </ligand>
</feature>
<name>SYI_NITV9</name>
<reference key="1">
    <citation type="submission" date="2008-10" db="EMBL/GenBank/DDBJ databases">
        <title>Complete sequence of Desulfovibrio vulgaris str. 'Miyazaki F'.</title>
        <authorList>
            <person name="Lucas S."/>
            <person name="Copeland A."/>
            <person name="Lapidus A."/>
            <person name="Glavina del Rio T."/>
            <person name="Dalin E."/>
            <person name="Tice H."/>
            <person name="Bruce D."/>
            <person name="Goodwin L."/>
            <person name="Pitluck S."/>
            <person name="Sims D."/>
            <person name="Brettin T."/>
            <person name="Detter J.C."/>
            <person name="Han C."/>
            <person name="Larimer F."/>
            <person name="Land M."/>
            <person name="Hauser L."/>
            <person name="Kyrpides N."/>
            <person name="Mikhailova N."/>
            <person name="Hazen T.C."/>
            <person name="Richardson P."/>
        </authorList>
    </citation>
    <scope>NUCLEOTIDE SEQUENCE [LARGE SCALE GENOMIC DNA]</scope>
    <source>
        <strain>DSM 19637 / Miyazaki F</strain>
    </source>
</reference>
<sequence>MSDYKKTLHLPDTKFPMKANLTQREPEMLKFWEGIDAYAAMAQASGQKGQYVLHDGPPYANGHIHLGTALNKILKDMVVKSRNMQGYAARYVPGWDCHGLPIEHKVEQELGEKKKELPAHVVRKRCRQYAEKYLDIQRKEFKRLGVLGAWDKPYMTMDPAYESATARELGNFVAAGNVVRSKKPIYWCCSCQTALAEAEVEYYDHTSPSIFVRFPLRDPKVADVLNVDPASAWIVIWTTTPWTLPDNMAVAVHPDHDYAVVRHDGAHYVLAAALVESSAKTFGWENCEVVSTVPGAKLEGLVATHPFYDRPSPVVLADYVVLDSGTGCVHTAPGHGREDYETGLRYGLEILSPLNDEGRFLDSVPFFAGLTVFEANPKVIEKLREVGNLLAERKISHSYPHCWRCKKPVIFRATTQWFIAMEKNDLRARALSAIRNDVRWIPAWGEERIHNMIEFRPDWCISRQRTWGVPIIALLCEGCGEAWNDAAWMRDIADRFAKHPTGCDYWYETPLEGIVPAGLACPHCGGNHWKKETDILDVWFDSGTSFSAVLEQRGDTAFPADLYLEGSDQHRGWFHSSLLASMGTRGVPPYRAVLTHGYVVDGEGRKMSKSIGNVIAPQEIIDKYGAEILRLWVASVDYREDIRISDEILSRLVDAYRRIRNTCRYLLGNIDDLTPEEIVPFSVMDPLDRYALDIVTDAHARIQEAYSEFEFHKVFHTLHNLCVTDLSAFYLDVLKDRLYASAKDSPERRSAQTALLHILLVLVRDMAPVLSFTAEEVFRHIPEALRPAAATVFALRGSDTPLYNVSSDESERWEAVLAVRSEVTKAIEPLRKAGTVGHSLDTHVTLYADHKLADLLRATGTDLRAVFIVSKLNIAPLEDAPQDAFASDEVKGLRIGVAKAPGAKCERCWIYHEELGADPGYPGACARCTTVLRTSGAE</sequence>
<evidence type="ECO:0000255" key="1">
    <source>
        <dbReference type="HAMAP-Rule" id="MF_02002"/>
    </source>
</evidence>
<comment type="function">
    <text evidence="1">Catalyzes the attachment of isoleucine to tRNA(Ile). As IleRS can inadvertently accommodate and process structurally similar amino acids such as valine, to avoid such errors it has two additional distinct tRNA(Ile)-dependent editing activities. One activity is designated as 'pretransfer' editing and involves the hydrolysis of activated Val-AMP. The other activity is designated 'posttransfer' editing and involves deacylation of mischarged Val-tRNA(Ile).</text>
</comment>
<comment type="catalytic activity">
    <reaction evidence="1">
        <text>tRNA(Ile) + L-isoleucine + ATP = L-isoleucyl-tRNA(Ile) + AMP + diphosphate</text>
        <dbReference type="Rhea" id="RHEA:11060"/>
        <dbReference type="Rhea" id="RHEA-COMP:9666"/>
        <dbReference type="Rhea" id="RHEA-COMP:9695"/>
        <dbReference type="ChEBI" id="CHEBI:30616"/>
        <dbReference type="ChEBI" id="CHEBI:33019"/>
        <dbReference type="ChEBI" id="CHEBI:58045"/>
        <dbReference type="ChEBI" id="CHEBI:78442"/>
        <dbReference type="ChEBI" id="CHEBI:78528"/>
        <dbReference type="ChEBI" id="CHEBI:456215"/>
        <dbReference type="EC" id="6.1.1.5"/>
    </reaction>
</comment>
<comment type="cofactor">
    <cofactor evidence="1">
        <name>Zn(2+)</name>
        <dbReference type="ChEBI" id="CHEBI:29105"/>
    </cofactor>
    <text evidence="1">Binds 1 zinc ion per subunit.</text>
</comment>
<comment type="subunit">
    <text evidence="1">Monomer.</text>
</comment>
<comment type="subcellular location">
    <subcellularLocation>
        <location evidence="1">Cytoplasm</location>
    </subcellularLocation>
</comment>
<comment type="domain">
    <text evidence="1">IleRS has two distinct active sites: one for aminoacylation and one for editing. The misactivated valine is translocated from the active site to the editing site, which sterically excludes the correctly activated isoleucine. The single editing site contains two valyl binding pockets, one specific for each substrate (Val-AMP or Val-tRNA(Ile)).</text>
</comment>
<comment type="similarity">
    <text evidence="1">Belongs to the class-I aminoacyl-tRNA synthetase family. IleS type 1 subfamily.</text>
</comment>
<organism>
    <name type="scientific">Nitratidesulfovibrio vulgaris (strain DSM 19637 / Miyazaki F)</name>
    <name type="common">Desulfovibrio vulgaris</name>
    <dbReference type="NCBI Taxonomy" id="883"/>
    <lineage>
        <taxon>Bacteria</taxon>
        <taxon>Pseudomonadati</taxon>
        <taxon>Thermodesulfobacteriota</taxon>
        <taxon>Desulfovibrionia</taxon>
        <taxon>Desulfovibrionales</taxon>
        <taxon>Desulfovibrionaceae</taxon>
        <taxon>Nitratidesulfovibrio</taxon>
    </lineage>
</organism>
<proteinExistence type="inferred from homology"/>
<accession>B8DPD6</accession>